<comment type="function">
    <text evidence="1">Involved in the biosynthesis of branched-chain amino acids (BCAA). Catalyzes an alkyl-migration followed by a ketol-acid reduction of (S)-2-acetolactate (S2AL) to yield (R)-2,3-dihydroxy-isovalerate. In the isomerase reaction, S2AL is rearranged via a Mg-dependent methyl migration to produce 3-hydroxy-3-methyl-2-ketobutyrate (HMKB). In the reductase reaction, this 2-ketoacid undergoes a metal-dependent reduction by NADPH to yield (R)-2,3-dihydroxy-isovalerate.</text>
</comment>
<comment type="catalytic activity">
    <reaction evidence="1">
        <text>(2R)-2,3-dihydroxy-3-methylbutanoate + NADP(+) = (2S)-2-acetolactate + NADPH + H(+)</text>
        <dbReference type="Rhea" id="RHEA:22068"/>
        <dbReference type="ChEBI" id="CHEBI:15378"/>
        <dbReference type="ChEBI" id="CHEBI:49072"/>
        <dbReference type="ChEBI" id="CHEBI:57783"/>
        <dbReference type="ChEBI" id="CHEBI:58349"/>
        <dbReference type="ChEBI" id="CHEBI:58476"/>
        <dbReference type="EC" id="1.1.1.86"/>
    </reaction>
</comment>
<comment type="catalytic activity">
    <reaction evidence="1">
        <text>(2R,3R)-2,3-dihydroxy-3-methylpentanoate + NADP(+) = (S)-2-ethyl-2-hydroxy-3-oxobutanoate + NADPH + H(+)</text>
        <dbReference type="Rhea" id="RHEA:13493"/>
        <dbReference type="ChEBI" id="CHEBI:15378"/>
        <dbReference type="ChEBI" id="CHEBI:49256"/>
        <dbReference type="ChEBI" id="CHEBI:49258"/>
        <dbReference type="ChEBI" id="CHEBI:57783"/>
        <dbReference type="ChEBI" id="CHEBI:58349"/>
        <dbReference type="EC" id="1.1.1.86"/>
    </reaction>
</comment>
<comment type="cofactor">
    <cofactor evidence="1">
        <name>Mg(2+)</name>
        <dbReference type="ChEBI" id="CHEBI:18420"/>
    </cofactor>
    <text evidence="1">Binds 2 magnesium ions per subunit.</text>
</comment>
<comment type="pathway">
    <text evidence="1">Amino-acid biosynthesis; L-isoleucine biosynthesis; L-isoleucine from 2-oxobutanoate: step 2/4.</text>
</comment>
<comment type="pathway">
    <text evidence="1">Amino-acid biosynthesis; L-valine biosynthesis; L-valine from pyruvate: step 2/4.</text>
</comment>
<comment type="similarity">
    <text evidence="1">Belongs to the ketol-acid reductoisomerase family.</text>
</comment>
<comment type="sequence caution" evidence="4">
    <conflict type="erroneous initiation">
        <sequence resource="EMBL-CDS" id="ABB57582"/>
    </conflict>
</comment>
<proteinExistence type="inferred from homology"/>
<keyword id="KW-0028">Amino-acid biosynthesis</keyword>
<keyword id="KW-0100">Branched-chain amino acid biosynthesis</keyword>
<keyword id="KW-0460">Magnesium</keyword>
<keyword id="KW-0479">Metal-binding</keyword>
<keyword id="KW-0521">NADP</keyword>
<keyword id="KW-0560">Oxidoreductase</keyword>
<keyword id="KW-1185">Reference proteome</keyword>
<gene>
    <name evidence="1" type="primary">ilvC</name>
    <name type="ordered locus">Synpcc7942_1552</name>
</gene>
<organism>
    <name type="scientific">Synechococcus elongatus (strain ATCC 33912 / PCC 7942 / FACHB-805)</name>
    <name type="common">Anacystis nidulans R2</name>
    <dbReference type="NCBI Taxonomy" id="1140"/>
    <lineage>
        <taxon>Bacteria</taxon>
        <taxon>Bacillati</taxon>
        <taxon>Cyanobacteriota</taxon>
        <taxon>Cyanophyceae</taxon>
        <taxon>Synechococcales</taxon>
        <taxon>Synechococcaceae</taxon>
        <taxon>Synechococcus</taxon>
    </lineage>
</organism>
<protein>
    <recommendedName>
        <fullName evidence="1">Ketol-acid reductoisomerase (NADP(+))</fullName>
        <shortName evidence="1">KARI</shortName>
        <ecNumber evidence="1">1.1.1.86</ecNumber>
    </recommendedName>
    <alternativeName>
        <fullName evidence="1">Acetohydroxy-acid isomeroreductase</fullName>
        <shortName evidence="1">AHIR</shortName>
    </alternativeName>
    <alternativeName>
        <fullName evidence="1">Alpha-keto-beta-hydroxylacyl reductoisomerase</fullName>
    </alternativeName>
    <alternativeName>
        <fullName evidence="1">Ketol-acid reductoisomerase type 1</fullName>
    </alternativeName>
    <alternativeName>
        <fullName evidence="1">Ketol-acid reductoisomerase type I</fullName>
    </alternativeName>
</protein>
<sequence>MARMYYDADANLDLLNGKTVAIIGYGSQGHAHALNLRDSGVNVVVGLYPGSKSAAKAEAEGLKVLPVAEAAQAADWIMILLPDEFQKSVFENEIRPALSAGKVLAFAHGFNIHFAQIVPPADVDVVMIAPKSPGHLVRRTYEQGQGVPCLFAIYQDASGQARDRAMAYAKGIGGTRAGILETSFREETETDLFGEQAVLCGGLSALIKAGFETLVEAGYQPELAYFECLHEVKLIVDLIVEGGLAAMRDSISNTAEYGDYVTGPRLITEETKAEMKRVLADIQQGRFALDFVQECGAGKPVMTATRRLEAEHPIESVGKDLRAMFSWLKK</sequence>
<feature type="chain" id="PRO_0000252797" description="Ketol-acid reductoisomerase (NADP(+))">
    <location>
        <begin position="1"/>
        <end position="330"/>
    </location>
</feature>
<feature type="domain" description="KARI N-terminal Rossmann" evidence="2">
    <location>
        <begin position="2"/>
        <end position="182"/>
    </location>
</feature>
<feature type="domain" description="KARI C-terminal knotted" evidence="3">
    <location>
        <begin position="183"/>
        <end position="328"/>
    </location>
</feature>
<feature type="active site" evidence="1">
    <location>
        <position position="108"/>
    </location>
</feature>
<feature type="binding site" evidence="1">
    <location>
        <begin position="25"/>
        <end position="28"/>
    </location>
    <ligand>
        <name>NADP(+)</name>
        <dbReference type="ChEBI" id="CHEBI:58349"/>
    </ligand>
</feature>
<feature type="binding site" evidence="1">
    <location>
        <position position="51"/>
    </location>
    <ligand>
        <name>NADP(+)</name>
        <dbReference type="ChEBI" id="CHEBI:58349"/>
    </ligand>
</feature>
<feature type="binding site" evidence="1">
    <location>
        <position position="53"/>
    </location>
    <ligand>
        <name>NADP(+)</name>
        <dbReference type="ChEBI" id="CHEBI:58349"/>
    </ligand>
</feature>
<feature type="binding site" evidence="1">
    <location>
        <begin position="83"/>
        <end position="86"/>
    </location>
    <ligand>
        <name>NADP(+)</name>
        <dbReference type="ChEBI" id="CHEBI:58349"/>
    </ligand>
</feature>
<feature type="binding site" evidence="1">
    <location>
        <position position="134"/>
    </location>
    <ligand>
        <name>NADP(+)</name>
        <dbReference type="ChEBI" id="CHEBI:58349"/>
    </ligand>
</feature>
<feature type="binding site" evidence="1">
    <location>
        <position position="191"/>
    </location>
    <ligand>
        <name>Mg(2+)</name>
        <dbReference type="ChEBI" id="CHEBI:18420"/>
        <label>1</label>
    </ligand>
</feature>
<feature type="binding site" evidence="1">
    <location>
        <position position="191"/>
    </location>
    <ligand>
        <name>Mg(2+)</name>
        <dbReference type="ChEBI" id="CHEBI:18420"/>
        <label>2</label>
    </ligand>
</feature>
<feature type="binding site" evidence="1">
    <location>
        <position position="195"/>
    </location>
    <ligand>
        <name>Mg(2+)</name>
        <dbReference type="ChEBI" id="CHEBI:18420"/>
        <label>1</label>
    </ligand>
</feature>
<feature type="binding site" evidence="1">
    <location>
        <position position="227"/>
    </location>
    <ligand>
        <name>Mg(2+)</name>
        <dbReference type="ChEBI" id="CHEBI:18420"/>
        <label>2</label>
    </ligand>
</feature>
<feature type="binding site" evidence="1">
    <location>
        <position position="231"/>
    </location>
    <ligand>
        <name>Mg(2+)</name>
        <dbReference type="ChEBI" id="CHEBI:18420"/>
        <label>2</label>
    </ligand>
</feature>
<feature type="binding site" evidence="1">
    <location>
        <position position="252"/>
    </location>
    <ligand>
        <name>substrate</name>
    </ligand>
</feature>
<dbReference type="EC" id="1.1.1.86" evidence="1"/>
<dbReference type="EMBL" id="CP000100">
    <property type="protein sequence ID" value="ABB57582.1"/>
    <property type="status" value="ALT_INIT"/>
    <property type="molecule type" value="Genomic_DNA"/>
</dbReference>
<dbReference type="RefSeq" id="WP_039755692.1">
    <property type="nucleotide sequence ID" value="NZ_JACJTX010000004.1"/>
</dbReference>
<dbReference type="SMR" id="Q31MY7"/>
<dbReference type="STRING" id="1140.Synpcc7942_1552"/>
<dbReference type="PaxDb" id="1140-Synpcc7942_1552"/>
<dbReference type="GeneID" id="72430417"/>
<dbReference type="KEGG" id="syf:Synpcc7942_1552"/>
<dbReference type="eggNOG" id="COG0059">
    <property type="taxonomic scope" value="Bacteria"/>
</dbReference>
<dbReference type="HOGENOM" id="CLU_033821_0_1_3"/>
<dbReference type="OrthoDB" id="9804088at2"/>
<dbReference type="BioCyc" id="SYNEL:SYNPCC7942_1552-MONOMER"/>
<dbReference type="UniPathway" id="UPA00047">
    <property type="reaction ID" value="UER00056"/>
</dbReference>
<dbReference type="UniPathway" id="UPA00049">
    <property type="reaction ID" value="UER00060"/>
</dbReference>
<dbReference type="Proteomes" id="UP000889800">
    <property type="component" value="Chromosome"/>
</dbReference>
<dbReference type="GO" id="GO:0005829">
    <property type="term" value="C:cytosol"/>
    <property type="evidence" value="ECO:0007669"/>
    <property type="project" value="TreeGrafter"/>
</dbReference>
<dbReference type="GO" id="GO:0004455">
    <property type="term" value="F:ketol-acid reductoisomerase activity"/>
    <property type="evidence" value="ECO:0007669"/>
    <property type="project" value="UniProtKB-UniRule"/>
</dbReference>
<dbReference type="GO" id="GO:0000287">
    <property type="term" value="F:magnesium ion binding"/>
    <property type="evidence" value="ECO:0007669"/>
    <property type="project" value="UniProtKB-UniRule"/>
</dbReference>
<dbReference type="GO" id="GO:0050661">
    <property type="term" value="F:NADP binding"/>
    <property type="evidence" value="ECO:0007669"/>
    <property type="project" value="InterPro"/>
</dbReference>
<dbReference type="GO" id="GO:0009097">
    <property type="term" value="P:isoleucine biosynthetic process"/>
    <property type="evidence" value="ECO:0007669"/>
    <property type="project" value="UniProtKB-UniRule"/>
</dbReference>
<dbReference type="GO" id="GO:0009099">
    <property type="term" value="P:L-valine biosynthetic process"/>
    <property type="evidence" value="ECO:0007669"/>
    <property type="project" value="UniProtKB-UniRule"/>
</dbReference>
<dbReference type="FunFam" id="3.40.50.720:FF:000023">
    <property type="entry name" value="Ketol-acid reductoisomerase (NADP(+))"/>
    <property type="match status" value="1"/>
</dbReference>
<dbReference type="Gene3D" id="6.10.240.10">
    <property type="match status" value="1"/>
</dbReference>
<dbReference type="Gene3D" id="3.40.50.720">
    <property type="entry name" value="NAD(P)-binding Rossmann-like Domain"/>
    <property type="match status" value="1"/>
</dbReference>
<dbReference type="HAMAP" id="MF_00435">
    <property type="entry name" value="IlvC"/>
    <property type="match status" value="1"/>
</dbReference>
<dbReference type="InterPro" id="IPR008927">
    <property type="entry name" value="6-PGluconate_DH-like_C_sf"/>
</dbReference>
<dbReference type="InterPro" id="IPR013023">
    <property type="entry name" value="KARI"/>
</dbReference>
<dbReference type="InterPro" id="IPR000506">
    <property type="entry name" value="KARI_C"/>
</dbReference>
<dbReference type="InterPro" id="IPR013116">
    <property type="entry name" value="KARI_N"/>
</dbReference>
<dbReference type="InterPro" id="IPR014359">
    <property type="entry name" value="KARI_prok"/>
</dbReference>
<dbReference type="InterPro" id="IPR036291">
    <property type="entry name" value="NAD(P)-bd_dom_sf"/>
</dbReference>
<dbReference type="NCBIfam" id="TIGR00465">
    <property type="entry name" value="ilvC"/>
    <property type="match status" value="1"/>
</dbReference>
<dbReference type="NCBIfam" id="NF004017">
    <property type="entry name" value="PRK05479.1"/>
    <property type="match status" value="1"/>
</dbReference>
<dbReference type="NCBIfam" id="NF009940">
    <property type="entry name" value="PRK13403.1"/>
    <property type="match status" value="1"/>
</dbReference>
<dbReference type="PANTHER" id="PTHR21371">
    <property type="entry name" value="KETOL-ACID REDUCTOISOMERASE, MITOCHONDRIAL"/>
    <property type="match status" value="1"/>
</dbReference>
<dbReference type="PANTHER" id="PTHR21371:SF1">
    <property type="entry name" value="KETOL-ACID REDUCTOISOMERASE, MITOCHONDRIAL"/>
    <property type="match status" value="1"/>
</dbReference>
<dbReference type="Pfam" id="PF01450">
    <property type="entry name" value="KARI_C"/>
    <property type="match status" value="1"/>
</dbReference>
<dbReference type="Pfam" id="PF07991">
    <property type="entry name" value="KARI_N"/>
    <property type="match status" value="1"/>
</dbReference>
<dbReference type="PIRSF" id="PIRSF000116">
    <property type="entry name" value="IlvC_gammaproteo"/>
    <property type="match status" value="1"/>
</dbReference>
<dbReference type="SUPFAM" id="SSF48179">
    <property type="entry name" value="6-phosphogluconate dehydrogenase C-terminal domain-like"/>
    <property type="match status" value="1"/>
</dbReference>
<dbReference type="SUPFAM" id="SSF51735">
    <property type="entry name" value="NAD(P)-binding Rossmann-fold domains"/>
    <property type="match status" value="1"/>
</dbReference>
<dbReference type="PROSITE" id="PS51851">
    <property type="entry name" value="KARI_C"/>
    <property type="match status" value="1"/>
</dbReference>
<dbReference type="PROSITE" id="PS51850">
    <property type="entry name" value="KARI_N"/>
    <property type="match status" value="1"/>
</dbReference>
<evidence type="ECO:0000255" key="1">
    <source>
        <dbReference type="HAMAP-Rule" id="MF_00435"/>
    </source>
</evidence>
<evidence type="ECO:0000255" key="2">
    <source>
        <dbReference type="PROSITE-ProRule" id="PRU01197"/>
    </source>
</evidence>
<evidence type="ECO:0000255" key="3">
    <source>
        <dbReference type="PROSITE-ProRule" id="PRU01198"/>
    </source>
</evidence>
<evidence type="ECO:0000305" key="4"/>
<reference key="1">
    <citation type="submission" date="2005-08" db="EMBL/GenBank/DDBJ databases">
        <title>Complete sequence of chromosome 1 of Synechococcus elongatus PCC 7942.</title>
        <authorList>
            <consortium name="US DOE Joint Genome Institute"/>
            <person name="Copeland A."/>
            <person name="Lucas S."/>
            <person name="Lapidus A."/>
            <person name="Barry K."/>
            <person name="Detter J.C."/>
            <person name="Glavina T."/>
            <person name="Hammon N."/>
            <person name="Israni S."/>
            <person name="Pitluck S."/>
            <person name="Schmutz J."/>
            <person name="Larimer F."/>
            <person name="Land M."/>
            <person name="Kyrpides N."/>
            <person name="Lykidis A."/>
            <person name="Golden S."/>
            <person name="Richardson P."/>
        </authorList>
    </citation>
    <scope>NUCLEOTIDE SEQUENCE [LARGE SCALE GENOMIC DNA]</scope>
    <source>
        <strain>ATCC 33912 / PCC 7942 / FACHB-805</strain>
    </source>
</reference>
<accession>Q31MY7</accession>
<name>ILVC_SYNE7</name>